<feature type="chain" id="PRO_1000006069" description="Elongation factor Ts">
    <location>
        <begin position="1"/>
        <end position="293"/>
    </location>
</feature>
<feature type="region of interest" description="Involved in Mg(2+) ion dislocation from EF-Tu" evidence="1">
    <location>
        <begin position="80"/>
        <end position="83"/>
    </location>
</feature>
<organism>
    <name type="scientific">Paraburkholderia xenovorans (strain LB400)</name>
    <dbReference type="NCBI Taxonomy" id="266265"/>
    <lineage>
        <taxon>Bacteria</taxon>
        <taxon>Pseudomonadati</taxon>
        <taxon>Pseudomonadota</taxon>
        <taxon>Betaproteobacteria</taxon>
        <taxon>Burkholderiales</taxon>
        <taxon>Burkholderiaceae</taxon>
        <taxon>Paraburkholderia</taxon>
    </lineage>
</organism>
<keyword id="KW-0963">Cytoplasm</keyword>
<keyword id="KW-0251">Elongation factor</keyword>
<keyword id="KW-0648">Protein biosynthesis</keyword>
<keyword id="KW-1185">Reference proteome</keyword>
<reference key="1">
    <citation type="journal article" date="2006" name="Proc. Natl. Acad. Sci. U.S.A.">
        <title>Burkholderia xenovorans LB400 harbors a multi-replicon, 9.73-Mbp genome shaped for versatility.</title>
        <authorList>
            <person name="Chain P.S.G."/>
            <person name="Denef V.J."/>
            <person name="Konstantinidis K.T."/>
            <person name="Vergez L.M."/>
            <person name="Agullo L."/>
            <person name="Reyes V.L."/>
            <person name="Hauser L."/>
            <person name="Cordova M."/>
            <person name="Gomez L."/>
            <person name="Gonzalez M."/>
            <person name="Land M."/>
            <person name="Lao V."/>
            <person name="Larimer F."/>
            <person name="LiPuma J.J."/>
            <person name="Mahenthiralingam E."/>
            <person name="Malfatti S.A."/>
            <person name="Marx C.J."/>
            <person name="Parnell J.J."/>
            <person name="Ramette A."/>
            <person name="Richardson P."/>
            <person name="Seeger M."/>
            <person name="Smith D."/>
            <person name="Spilker T."/>
            <person name="Sul W.J."/>
            <person name="Tsoi T.V."/>
            <person name="Ulrich L.E."/>
            <person name="Zhulin I.B."/>
            <person name="Tiedje J.M."/>
        </authorList>
    </citation>
    <scope>NUCLEOTIDE SEQUENCE [LARGE SCALE GENOMIC DNA]</scope>
    <source>
        <strain>LB400</strain>
    </source>
</reference>
<accession>Q13XB7</accession>
<comment type="function">
    <text evidence="1">Associates with the EF-Tu.GDP complex and induces the exchange of GDP to GTP. It remains bound to the aminoacyl-tRNA.EF-Tu.GTP complex up to the GTP hydrolysis stage on the ribosome.</text>
</comment>
<comment type="subcellular location">
    <subcellularLocation>
        <location evidence="1">Cytoplasm</location>
    </subcellularLocation>
</comment>
<comment type="similarity">
    <text evidence="1">Belongs to the EF-Ts family.</text>
</comment>
<protein>
    <recommendedName>
        <fullName evidence="1">Elongation factor Ts</fullName>
        <shortName evidence="1">EF-Ts</shortName>
    </recommendedName>
</protein>
<dbReference type="EMBL" id="CP000270">
    <property type="protein sequence ID" value="ABE31272.1"/>
    <property type="molecule type" value="Genomic_DNA"/>
</dbReference>
<dbReference type="RefSeq" id="WP_011488866.1">
    <property type="nucleotide sequence ID" value="NC_007951.1"/>
</dbReference>
<dbReference type="SMR" id="Q13XB7"/>
<dbReference type="STRING" id="266265.Bxe_A1683"/>
<dbReference type="KEGG" id="bxb:DR64_3848"/>
<dbReference type="KEGG" id="bxe:Bxe_A1683"/>
<dbReference type="PATRIC" id="fig|266265.5.peg.2865"/>
<dbReference type="eggNOG" id="COG0264">
    <property type="taxonomic scope" value="Bacteria"/>
</dbReference>
<dbReference type="OrthoDB" id="9808348at2"/>
<dbReference type="Proteomes" id="UP000001817">
    <property type="component" value="Chromosome 1"/>
</dbReference>
<dbReference type="GO" id="GO:0005737">
    <property type="term" value="C:cytoplasm"/>
    <property type="evidence" value="ECO:0007669"/>
    <property type="project" value="UniProtKB-SubCell"/>
</dbReference>
<dbReference type="GO" id="GO:0003746">
    <property type="term" value="F:translation elongation factor activity"/>
    <property type="evidence" value="ECO:0007669"/>
    <property type="project" value="UniProtKB-UniRule"/>
</dbReference>
<dbReference type="CDD" id="cd14275">
    <property type="entry name" value="UBA_EF-Ts"/>
    <property type="match status" value="1"/>
</dbReference>
<dbReference type="FunFam" id="1.10.286.20:FF:000001">
    <property type="entry name" value="Elongation factor Ts"/>
    <property type="match status" value="1"/>
</dbReference>
<dbReference type="FunFam" id="1.10.8.10:FF:000001">
    <property type="entry name" value="Elongation factor Ts"/>
    <property type="match status" value="1"/>
</dbReference>
<dbReference type="Gene3D" id="1.10.286.20">
    <property type="match status" value="1"/>
</dbReference>
<dbReference type="Gene3D" id="1.10.8.10">
    <property type="entry name" value="DNA helicase RuvA subunit, C-terminal domain"/>
    <property type="match status" value="1"/>
</dbReference>
<dbReference type="Gene3D" id="3.30.479.20">
    <property type="entry name" value="Elongation factor Ts, dimerisation domain"/>
    <property type="match status" value="2"/>
</dbReference>
<dbReference type="HAMAP" id="MF_00050">
    <property type="entry name" value="EF_Ts"/>
    <property type="match status" value="1"/>
</dbReference>
<dbReference type="InterPro" id="IPR036402">
    <property type="entry name" value="EF-Ts_dimer_sf"/>
</dbReference>
<dbReference type="InterPro" id="IPR001816">
    <property type="entry name" value="Transl_elong_EFTs/EF1B"/>
</dbReference>
<dbReference type="InterPro" id="IPR014039">
    <property type="entry name" value="Transl_elong_EFTs/EF1B_dimer"/>
</dbReference>
<dbReference type="InterPro" id="IPR018101">
    <property type="entry name" value="Transl_elong_Ts_CS"/>
</dbReference>
<dbReference type="InterPro" id="IPR009060">
    <property type="entry name" value="UBA-like_sf"/>
</dbReference>
<dbReference type="NCBIfam" id="TIGR00116">
    <property type="entry name" value="tsf"/>
    <property type="match status" value="1"/>
</dbReference>
<dbReference type="PANTHER" id="PTHR11741">
    <property type="entry name" value="ELONGATION FACTOR TS"/>
    <property type="match status" value="1"/>
</dbReference>
<dbReference type="PANTHER" id="PTHR11741:SF0">
    <property type="entry name" value="ELONGATION FACTOR TS, MITOCHONDRIAL"/>
    <property type="match status" value="1"/>
</dbReference>
<dbReference type="Pfam" id="PF00889">
    <property type="entry name" value="EF_TS"/>
    <property type="match status" value="1"/>
</dbReference>
<dbReference type="SUPFAM" id="SSF54713">
    <property type="entry name" value="Elongation factor Ts (EF-Ts), dimerisation domain"/>
    <property type="match status" value="2"/>
</dbReference>
<dbReference type="SUPFAM" id="SSF46934">
    <property type="entry name" value="UBA-like"/>
    <property type="match status" value="1"/>
</dbReference>
<dbReference type="PROSITE" id="PS01127">
    <property type="entry name" value="EF_TS_2"/>
    <property type="match status" value="1"/>
</dbReference>
<gene>
    <name evidence="1" type="primary">tsf</name>
    <name type="ordered locus">Bxeno_A2734</name>
    <name type="ORF">Bxe_A1683</name>
</gene>
<evidence type="ECO:0000255" key="1">
    <source>
        <dbReference type="HAMAP-Rule" id="MF_00050"/>
    </source>
</evidence>
<name>EFTS_PARXL</name>
<sequence>MAAITASMVAELRAKTDAPMMECKKALTEADGDMARAEELLRVKLGNKASKAASRVTAEGVVASFIGGNAGSLVELNCETDFVSKNDDFLAFSKKVAELVATQNPADVAALSALPLDGSTVDAVRLALVGKIGENLSIRRFVRFDTANKLAAYLHGTRIGVLVEYTGADEQVGKDVAMHIAAMKPVSLSSEDVPAELIAKERSIAEQKAAESGKPAEIVAKMVDGSVQKYLKEVSLLNQTFVKNDKQTIEQMLKAGNASVQKFALFVVGEGIEKKQDDFAAEVAAQVAAAKQQ</sequence>
<proteinExistence type="inferred from homology"/>